<dbReference type="EMBL" id="AACD01000038">
    <property type="protein sequence ID" value="EAA64390.1"/>
    <property type="molecule type" value="Genomic_DNA"/>
</dbReference>
<dbReference type="EMBL" id="BN001307">
    <property type="protein sequence ID" value="CBF86522.1"/>
    <property type="molecule type" value="Genomic_DNA"/>
</dbReference>
<dbReference type="RefSeq" id="XP_659883.1">
    <property type="nucleotide sequence ID" value="XM_654791.1"/>
</dbReference>
<dbReference type="FunCoup" id="Q5BB01">
    <property type="interactions" value="334"/>
</dbReference>
<dbReference type="STRING" id="227321.Q5BB01"/>
<dbReference type="EnsemblFungi" id="CBF86522">
    <property type="protein sequence ID" value="CBF86522"/>
    <property type="gene ID" value="ANIA_02279"/>
</dbReference>
<dbReference type="KEGG" id="ani:ANIA_02279"/>
<dbReference type="VEuPathDB" id="FungiDB:AN2279"/>
<dbReference type="eggNOG" id="KOG1725">
    <property type="taxonomic scope" value="Eukaryota"/>
</dbReference>
<dbReference type="HOGENOM" id="CLU_028431_2_1_1"/>
<dbReference type="InParanoid" id="Q5BB01"/>
<dbReference type="OMA" id="DTQYWVV"/>
<dbReference type="OrthoDB" id="10009287at2759"/>
<dbReference type="Proteomes" id="UP000000560">
    <property type="component" value="Chromosome VII"/>
</dbReference>
<dbReference type="GO" id="GO:0005789">
    <property type="term" value="C:endoplasmic reticulum membrane"/>
    <property type="evidence" value="ECO:0007669"/>
    <property type="project" value="UniProtKB-SubCell"/>
</dbReference>
<dbReference type="GO" id="GO:0000139">
    <property type="term" value="C:Golgi membrane"/>
    <property type="evidence" value="ECO:0007669"/>
    <property type="project" value="UniProtKB-SubCell"/>
</dbReference>
<dbReference type="InterPro" id="IPR004345">
    <property type="entry name" value="TB2_DP1_HVA22"/>
</dbReference>
<dbReference type="PANTHER" id="PTHR12300">
    <property type="entry name" value="HVA22-LIKE PROTEINS"/>
    <property type="match status" value="1"/>
</dbReference>
<dbReference type="PANTHER" id="PTHR12300:SF161">
    <property type="entry name" value="RECEPTOR EXPRESSION-ENHANCING PROTEIN"/>
    <property type="match status" value="1"/>
</dbReference>
<dbReference type="Pfam" id="PF03134">
    <property type="entry name" value="TB2_DP1_HVA22"/>
    <property type="match status" value="1"/>
</dbReference>
<sequence>MASFQDRAQHTIAQLDKELSKYPVLNNLERQTSVPKVYVILGLGGIYTFLVFFNIAGQLLVNLAGFILPTYYSLDALFSAGKADDTQWLTYWVVYAFFTVVESAISAPYWFPFYYIFKFALVLWLALPQTNGAQIVFKSLVQPLVGRYFTGGSTSANLRAQADAATKSQ</sequence>
<feature type="chain" id="PRO_0000101852" description="Protein yop1">
    <location>
        <begin position="1"/>
        <end position="169"/>
    </location>
</feature>
<feature type="topological domain" description="Cytoplasmic" evidence="1">
    <location>
        <begin position="1"/>
        <end position="35"/>
    </location>
</feature>
<feature type="transmembrane region" description="Helical" evidence="1">
    <location>
        <begin position="36"/>
        <end position="55"/>
    </location>
</feature>
<feature type="topological domain" description="Lumenal" evidence="1">
    <location>
        <position position="56"/>
    </location>
</feature>
<feature type="transmembrane region" description="Helical" evidence="1">
    <location>
        <begin position="57"/>
        <end position="76"/>
    </location>
</feature>
<feature type="topological domain" description="Cytoplasmic" evidence="1">
    <location>
        <begin position="77"/>
        <end position="88"/>
    </location>
</feature>
<feature type="transmembrane region" description="Helical" evidence="1">
    <location>
        <begin position="89"/>
        <end position="103"/>
    </location>
</feature>
<feature type="topological domain" description="Lumenal" evidence="1">
    <location>
        <begin position="104"/>
        <end position="105"/>
    </location>
</feature>
<feature type="transmembrane region" description="Helical" evidence="1">
    <location>
        <begin position="106"/>
        <end position="124"/>
    </location>
</feature>
<feature type="topological domain" description="Cytoplasmic" evidence="1">
    <location>
        <begin position="125"/>
        <end position="169"/>
    </location>
</feature>
<reference key="1">
    <citation type="journal article" date="2005" name="Nature">
        <title>Sequencing of Aspergillus nidulans and comparative analysis with A. fumigatus and A. oryzae.</title>
        <authorList>
            <person name="Galagan J.E."/>
            <person name="Calvo S.E."/>
            <person name="Cuomo C."/>
            <person name="Ma L.-J."/>
            <person name="Wortman J.R."/>
            <person name="Batzoglou S."/>
            <person name="Lee S.-I."/>
            <person name="Bastuerkmen M."/>
            <person name="Spevak C.C."/>
            <person name="Clutterbuck J."/>
            <person name="Kapitonov V."/>
            <person name="Jurka J."/>
            <person name="Scazzocchio C."/>
            <person name="Farman M.L."/>
            <person name="Butler J."/>
            <person name="Purcell S."/>
            <person name="Harris S."/>
            <person name="Braus G.H."/>
            <person name="Draht O."/>
            <person name="Busch S."/>
            <person name="D'Enfert C."/>
            <person name="Bouchier C."/>
            <person name="Goldman G.H."/>
            <person name="Bell-Pedersen D."/>
            <person name="Griffiths-Jones S."/>
            <person name="Doonan J.H."/>
            <person name="Yu J."/>
            <person name="Vienken K."/>
            <person name="Pain A."/>
            <person name="Freitag M."/>
            <person name="Selker E.U."/>
            <person name="Archer D.B."/>
            <person name="Penalva M.A."/>
            <person name="Oakley B.R."/>
            <person name="Momany M."/>
            <person name="Tanaka T."/>
            <person name="Kumagai T."/>
            <person name="Asai K."/>
            <person name="Machida M."/>
            <person name="Nierman W.C."/>
            <person name="Denning D.W."/>
            <person name="Caddick M.X."/>
            <person name="Hynes M."/>
            <person name="Paoletti M."/>
            <person name="Fischer R."/>
            <person name="Miller B.L."/>
            <person name="Dyer P.S."/>
            <person name="Sachs M.S."/>
            <person name="Osmani S.A."/>
            <person name="Birren B.W."/>
        </authorList>
    </citation>
    <scope>NUCLEOTIDE SEQUENCE [LARGE SCALE GENOMIC DNA]</scope>
    <source>
        <strain>FGSC A4 / ATCC 38163 / CBS 112.46 / NRRL 194 / M139</strain>
    </source>
</reference>
<reference key="2">
    <citation type="journal article" date="2009" name="Fungal Genet. Biol.">
        <title>The 2008 update of the Aspergillus nidulans genome annotation: a community effort.</title>
        <authorList>
            <person name="Wortman J.R."/>
            <person name="Gilsenan J.M."/>
            <person name="Joardar V."/>
            <person name="Deegan J."/>
            <person name="Clutterbuck J."/>
            <person name="Andersen M.R."/>
            <person name="Archer D."/>
            <person name="Bencina M."/>
            <person name="Braus G."/>
            <person name="Coutinho P."/>
            <person name="von Dohren H."/>
            <person name="Doonan J."/>
            <person name="Driessen A.J."/>
            <person name="Durek P."/>
            <person name="Espeso E."/>
            <person name="Fekete E."/>
            <person name="Flipphi M."/>
            <person name="Estrada C.G."/>
            <person name="Geysens S."/>
            <person name="Goldman G."/>
            <person name="de Groot P.W."/>
            <person name="Hansen K."/>
            <person name="Harris S.D."/>
            <person name="Heinekamp T."/>
            <person name="Helmstaedt K."/>
            <person name="Henrissat B."/>
            <person name="Hofmann G."/>
            <person name="Homan T."/>
            <person name="Horio T."/>
            <person name="Horiuchi H."/>
            <person name="James S."/>
            <person name="Jones M."/>
            <person name="Karaffa L."/>
            <person name="Karanyi Z."/>
            <person name="Kato M."/>
            <person name="Keller N."/>
            <person name="Kelly D.E."/>
            <person name="Kiel J.A."/>
            <person name="Kim J.M."/>
            <person name="van der Klei I.J."/>
            <person name="Klis F.M."/>
            <person name="Kovalchuk A."/>
            <person name="Krasevec N."/>
            <person name="Kubicek C.P."/>
            <person name="Liu B."/>
            <person name="Maccabe A."/>
            <person name="Meyer V."/>
            <person name="Mirabito P."/>
            <person name="Miskei M."/>
            <person name="Mos M."/>
            <person name="Mullins J."/>
            <person name="Nelson D.R."/>
            <person name="Nielsen J."/>
            <person name="Oakley B.R."/>
            <person name="Osmani S.A."/>
            <person name="Pakula T."/>
            <person name="Paszewski A."/>
            <person name="Paulsen I."/>
            <person name="Pilsyk S."/>
            <person name="Pocsi I."/>
            <person name="Punt P.J."/>
            <person name="Ram A.F."/>
            <person name="Ren Q."/>
            <person name="Robellet X."/>
            <person name="Robson G."/>
            <person name="Seiboth B."/>
            <person name="van Solingen P."/>
            <person name="Specht T."/>
            <person name="Sun J."/>
            <person name="Taheri-Talesh N."/>
            <person name="Takeshita N."/>
            <person name="Ussery D."/>
            <person name="vanKuyk P.A."/>
            <person name="Visser H."/>
            <person name="van de Vondervoort P.J."/>
            <person name="de Vries R.P."/>
            <person name="Walton J."/>
            <person name="Xiang X."/>
            <person name="Xiong Y."/>
            <person name="Zeng A.P."/>
            <person name="Brandt B.W."/>
            <person name="Cornell M.J."/>
            <person name="van den Hondel C.A."/>
            <person name="Visser J."/>
            <person name="Oliver S.G."/>
            <person name="Turner G."/>
        </authorList>
    </citation>
    <scope>GENOME REANNOTATION</scope>
    <source>
        <strain>FGSC A4 / ATCC 38163 / CBS 112.46 / NRRL 194 / M139</strain>
    </source>
</reference>
<gene>
    <name type="primary">yop1</name>
    <name type="ORF">AN2279</name>
</gene>
<protein>
    <recommendedName>
        <fullName>Protein yop1</fullName>
    </recommendedName>
</protein>
<accession>Q5BB01</accession>
<accession>C8VN26</accession>
<comment type="function">
    <text evidence="1">Required to generate and maintain the structure of the tubular endoplasmic reticulum network and the vacuole. Induces high curvature in membranes and causes membrane tubule formation. Involved in membrane/vesicle trafficking.</text>
</comment>
<comment type="subunit">
    <text evidence="1">Oligomer.</text>
</comment>
<comment type="subcellular location">
    <subcellularLocation>
        <location evidence="1">Endoplasmic reticulum membrane</location>
        <topology evidence="1">Multi-pass membrane protein</topology>
    </subcellularLocation>
    <subcellularLocation>
        <location evidence="1">Golgi apparatus membrane</location>
        <topology evidence="2">Multi-pass membrane protein</topology>
    </subcellularLocation>
</comment>
<comment type="domain">
    <text evidence="1">The short lumenal loops between transmembrane domains 1 and 2 and between transmembrane domains 3 and 4 may impart a wedge-like configuration, thus deforming membranes.</text>
</comment>
<comment type="similarity">
    <text evidence="3">Belongs to the DP1 family.</text>
</comment>
<keyword id="KW-0256">Endoplasmic reticulum</keyword>
<keyword id="KW-0333">Golgi apparatus</keyword>
<keyword id="KW-0472">Membrane</keyword>
<keyword id="KW-1185">Reference proteome</keyword>
<keyword id="KW-0812">Transmembrane</keyword>
<keyword id="KW-1133">Transmembrane helix</keyword>
<evidence type="ECO:0000250" key="1">
    <source>
        <dbReference type="UniProtKB" id="Q12402"/>
    </source>
</evidence>
<evidence type="ECO:0000255" key="2"/>
<evidence type="ECO:0000305" key="3"/>
<organism>
    <name type="scientific">Emericella nidulans (strain FGSC A4 / ATCC 38163 / CBS 112.46 / NRRL 194 / M139)</name>
    <name type="common">Aspergillus nidulans</name>
    <dbReference type="NCBI Taxonomy" id="227321"/>
    <lineage>
        <taxon>Eukaryota</taxon>
        <taxon>Fungi</taxon>
        <taxon>Dikarya</taxon>
        <taxon>Ascomycota</taxon>
        <taxon>Pezizomycotina</taxon>
        <taxon>Eurotiomycetes</taxon>
        <taxon>Eurotiomycetidae</taxon>
        <taxon>Eurotiales</taxon>
        <taxon>Aspergillaceae</taxon>
        <taxon>Aspergillus</taxon>
        <taxon>Aspergillus subgen. Nidulantes</taxon>
    </lineage>
</organism>
<proteinExistence type="inferred from homology"/>
<name>YOP1_EMENI</name>